<name>RECF_ALLAM</name>
<gene>
    <name evidence="1" type="primary">recF</name>
    <name type="ordered locus">Avi_0311</name>
</gene>
<feature type="chain" id="PRO_1000205469" description="DNA replication and repair protein RecF">
    <location>
        <begin position="1"/>
        <end position="374"/>
    </location>
</feature>
<feature type="binding site" evidence="1">
    <location>
        <begin position="34"/>
        <end position="41"/>
    </location>
    <ligand>
        <name>ATP</name>
        <dbReference type="ChEBI" id="CHEBI:30616"/>
    </ligand>
</feature>
<protein>
    <recommendedName>
        <fullName evidence="1">DNA replication and repair protein RecF</fullName>
    </recommendedName>
</protein>
<reference key="1">
    <citation type="journal article" date="2009" name="J. Bacteriol.">
        <title>Genome sequences of three Agrobacterium biovars help elucidate the evolution of multichromosome genomes in bacteria.</title>
        <authorList>
            <person name="Slater S.C."/>
            <person name="Goldman B.S."/>
            <person name="Goodner B."/>
            <person name="Setubal J.C."/>
            <person name="Farrand S.K."/>
            <person name="Nester E.W."/>
            <person name="Burr T.J."/>
            <person name="Banta L."/>
            <person name="Dickerman A.W."/>
            <person name="Paulsen I."/>
            <person name="Otten L."/>
            <person name="Suen G."/>
            <person name="Welch R."/>
            <person name="Almeida N.F."/>
            <person name="Arnold F."/>
            <person name="Burton O.T."/>
            <person name="Du Z."/>
            <person name="Ewing A."/>
            <person name="Godsy E."/>
            <person name="Heisel S."/>
            <person name="Houmiel K.L."/>
            <person name="Jhaveri J."/>
            <person name="Lu J."/>
            <person name="Miller N.M."/>
            <person name="Norton S."/>
            <person name="Chen Q."/>
            <person name="Phoolcharoen W."/>
            <person name="Ohlin V."/>
            <person name="Ondrusek D."/>
            <person name="Pride N."/>
            <person name="Stricklin S.L."/>
            <person name="Sun J."/>
            <person name="Wheeler C."/>
            <person name="Wilson L."/>
            <person name="Zhu H."/>
            <person name="Wood D.W."/>
        </authorList>
    </citation>
    <scope>NUCLEOTIDE SEQUENCE [LARGE SCALE GENOMIC DNA]</scope>
    <source>
        <strain>ATCC BAA-846 / DSM 112012 / S4</strain>
    </source>
</reference>
<proteinExistence type="inferred from homology"/>
<organism>
    <name type="scientific">Allorhizobium ampelinum (strain ATCC BAA-846 / DSM 112012 / S4)</name>
    <name type="common">Agrobacterium vitis (strain S4)</name>
    <dbReference type="NCBI Taxonomy" id="311402"/>
    <lineage>
        <taxon>Bacteria</taxon>
        <taxon>Pseudomonadati</taxon>
        <taxon>Pseudomonadota</taxon>
        <taxon>Alphaproteobacteria</taxon>
        <taxon>Hyphomicrobiales</taxon>
        <taxon>Rhizobiaceae</taxon>
        <taxon>Rhizobium/Agrobacterium group</taxon>
        <taxon>Allorhizobium</taxon>
        <taxon>Allorhizobium ampelinum</taxon>
    </lineage>
</organism>
<keyword id="KW-0067">ATP-binding</keyword>
<keyword id="KW-0963">Cytoplasm</keyword>
<keyword id="KW-0227">DNA damage</keyword>
<keyword id="KW-0234">DNA repair</keyword>
<keyword id="KW-0235">DNA replication</keyword>
<keyword id="KW-0238">DNA-binding</keyword>
<keyword id="KW-0547">Nucleotide-binding</keyword>
<keyword id="KW-1185">Reference proteome</keyword>
<keyword id="KW-0742">SOS response</keyword>
<accession>B9JZ91</accession>
<sequence>MAEKTFINRLQLTDFRNYGSASLRLDGRHVVLTGNNGSGKTNLMEAVSFLSPGRGLRRAVLSDVARAGAASGFSIFASLEGMAGDVELGTGSEVLDETAVRRLRINGASVRSVDELTDHLRVLWLTPAMDGLFTGSSSERRRFLDRLVLSIDPQHGRRASDFERAMRSRNKLLSEGRFDASWLAGIEQQMAALGIAMALARQEMMRLLAALIEQRREPETFPGADLMLSGFMDEHAGTAAIDLEDTYRDSLAGSRGRDAAAGRTLEGPHRSDLLVRHREKDMEAERCSTGEQKALLIGLILAHAELVATMTGFAPILLLDEIAAHLDEGRRAALFDRIDVLGGQAFMTGTDAQMFASLGDRAQFVTVDDGHLSL</sequence>
<evidence type="ECO:0000255" key="1">
    <source>
        <dbReference type="HAMAP-Rule" id="MF_00365"/>
    </source>
</evidence>
<comment type="function">
    <text evidence="1">The RecF protein is involved in DNA metabolism; it is required for DNA replication and normal SOS inducibility. RecF binds preferentially to single-stranded, linear DNA. It also seems to bind ATP.</text>
</comment>
<comment type="subcellular location">
    <subcellularLocation>
        <location evidence="1">Cytoplasm</location>
    </subcellularLocation>
</comment>
<comment type="similarity">
    <text evidence="1">Belongs to the RecF family.</text>
</comment>
<dbReference type="EMBL" id="CP000633">
    <property type="protein sequence ID" value="ACM35203.1"/>
    <property type="molecule type" value="Genomic_DNA"/>
</dbReference>
<dbReference type="RefSeq" id="WP_012654733.1">
    <property type="nucleotide sequence ID" value="NC_011989.1"/>
</dbReference>
<dbReference type="SMR" id="B9JZ91"/>
<dbReference type="STRING" id="311402.Avi_0311"/>
<dbReference type="DNASU" id="7387766"/>
<dbReference type="KEGG" id="avi:Avi_0311"/>
<dbReference type="eggNOG" id="COG1195">
    <property type="taxonomic scope" value="Bacteria"/>
</dbReference>
<dbReference type="HOGENOM" id="CLU_040267_2_0_5"/>
<dbReference type="Proteomes" id="UP000001596">
    <property type="component" value="Chromosome 1"/>
</dbReference>
<dbReference type="GO" id="GO:0005737">
    <property type="term" value="C:cytoplasm"/>
    <property type="evidence" value="ECO:0007669"/>
    <property type="project" value="UniProtKB-SubCell"/>
</dbReference>
<dbReference type="GO" id="GO:0005524">
    <property type="term" value="F:ATP binding"/>
    <property type="evidence" value="ECO:0007669"/>
    <property type="project" value="UniProtKB-UniRule"/>
</dbReference>
<dbReference type="GO" id="GO:0016887">
    <property type="term" value="F:ATP hydrolysis activity"/>
    <property type="evidence" value="ECO:0007669"/>
    <property type="project" value="InterPro"/>
</dbReference>
<dbReference type="GO" id="GO:0003697">
    <property type="term" value="F:single-stranded DNA binding"/>
    <property type="evidence" value="ECO:0007669"/>
    <property type="project" value="UniProtKB-UniRule"/>
</dbReference>
<dbReference type="GO" id="GO:0006260">
    <property type="term" value="P:DNA replication"/>
    <property type="evidence" value="ECO:0007669"/>
    <property type="project" value="UniProtKB-UniRule"/>
</dbReference>
<dbReference type="GO" id="GO:0000731">
    <property type="term" value="P:DNA synthesis involved in DNA repair"/>
    <property type="evidence" value="ECO:0007669"/>
    <property type="project" value="TreeGrafter"/>
</dbReference>
<dbReference type="GO" id="GO:0006302">
    <property type="term" value="P:double-strand break repair"/>
    <property type="evidence" value="ECO:0007669"/>
    <property type="project" value="TreeGrafter"/>
</dbReference>
<dbReference type="GO" id="GO:0009432">
    <property type="term" value="P:SOS response"/>
    <property type="evidence" value="ECO:0007669"/>
    <property type="project" value="UniProtKB-UniRule"/>
</dbReference>
<dbReference type="CDD" id="cd03242">
    <property type="entry name" value="ABC_RecF"/>
    <property type="match status" value="1"/>
</dbReference>
<dbReference type="Gene3D" id="3.40.50.300">
    <property type="entry name" value="P-loop containing nucleotide triphosphate hydrolases"/>
    <property type="match status" value="1"/>
</dbReference>
<dbReference type="Gene3D" id="1.20.1050.90">
    <property type="entry name" value="RecF/RecN/SMC, N-terminal domain"/>
    <property type="match status" value="1"/>
</dbReference>
<dbReference type="HAMAP" id="MF_00365">
    <property type="entry name" value="RecF"/>
    <property type="match status" value="1"/>
</dbReference>
<dbReference type="InterPro" id="IPR003593">
    <property type="entry name" value="AAA+_ATPase"/>
</dbReference>
<dbReference type="InterPro" id="IPR001238">
    <property type="entry name" value="DNA-binding_RecF"/>
</dbReference>
<dbReference type="InterPro" id="IPR018078">
    <property type="entry name" value="DNA-binding_RecF_CS"/>
</dbReference>
<dbReference type="InterPro" id="IPR027417">
    <property type="entry name" value="P-loop_NTPase"/>
</dbReference>
<dbReference type="InterPro" id="IPR003395">
    <property type="entry name" value="RecF/RecN/SMC_N"/>
</dbReference>
<dbReference type="InterPro" id="IPR042174">
    <property type="entry name" value="RecF_2"/>
</dbReference>
<dbReference type="NCBIfam" id="TIGR00611">
    <property type="entry name" value="recf"/>
    <property type="match status" value="1"/>
</dbReference>
<dbReference type="PANTHER" id="PTHR32182">
    <property type="entry name" value="DNA REPLICATION AND REPAIR PROTEIN RECF"/>
    <property type="match status" value="1"/>
</dbReference>
<dbReference type="PANTHER" id="PTHR32182:SF0">
    <property type="entry name" value="DNA REPLICATION AND REPAIR PROTEIN RECF"/>
    <property type="match status" value="1"/>
</dbReference>
<dbReference type="Pfam" id="PF02463">
    <property type="entry name" value="SMC_N"/>
    <property type="match status" value="1"/>
</dbReference>
<dbReference type="SMART" id="SM00382">
    <property type="entry name" value="AAA"/>
    <property type="match status" value="1"/>
</dbReference>
<dbReference type="SUPFAM" id="SSF52540">
    <property type="entry name" value="P-loop containing nucleoside triphosphate hydrolases"/>
    <property type="match status" value="1"/>
</dbReference>
<dbReference type="PROSITE" id="PS00617">
    <property type="entry name" value="RECF_1"/>
    <property type="match status" value="1"/>
</dbReference>
<dbReference type="PROSITE" id="PS00618">
    <property type="entry name" value="RECF_2"/>
    <property type="match status" value="1"/>
</dbReference>